<name>SP2D_BACSU</name>
<gene>
    <name type="primary">spoIID</name>
    <name type="synonym">spoIIC</name>
    <name type="ordered locus">BSU36750</name>
</gene>
<accession>P07372</accession>
<proteinExistence type="predicted"/>
<reference key="1">
    <citation type="journal article" date="1986" name="J. Gen. Microbiol.">
        <title>spoIID operon of Bacillus subtilis: cloning and sequence.</title>
        <authorList>
            <person name="Lopez-Diaz I."/>
            <person name="Clarke S."/>
            <person name="Mandelstam J."/>
        </authorList>
    </citation>
    <scope>NUCLEOTIDE SEQUENCE [GENOMIC DNA]</scope>
</reference>
<reference key="2">
    <citation type="submission" date="1996-10" db="EMBL/GenBank/DDBJ databases">
        <authorList>
            <person name="Glaser P."/>
            <person name="Danchin A."/>
            <person name="Kunst F."/>
            <person name="Moszer I."/>
        </authorList>
    </citation>
    <scope>NUCLEOTIDE SEQUENCE [GENOMIC DNA]</scope>
    <source>
        <strain>168</strain>
    </source>
</reference>
<reference key="3">
    <citation type="journal article" date="1997" name="Nature">
        <title>The complete genome sequence of the Gram-positive bacterium Bacillus subtilis.</title>
        <authorList>
            <person name="Kunst F."/>
            <person name="Ogasawara N."/>
            <person name="Moszer I."/>
            <person name="Albertini A.M."/>
            <person name="Alloni G."/>
            <person name="Azevedo V."/>
            <person name="Bertero M.G."/>
            <person name="Bessieres P."/>
            <person name="Bolotin A."/>
            <person name="Borchert S."/>
            <person name="Borriss R."/>
            <person name="Boursier L."/>
            <person name="Brans A."/>
            <person name="Braun M."/>
            <person name="Brignell S.C."/>
            <person name="Bron S."/>
            <person name="Brouillet S."/>
            <person name="Bruschi C.V."/>
            <person name="Caldwell B."/>
            <person name="Capuano V."/>
            <person name="Carter N.M."/>
            <person name="Choi S.-K."/>
            <person name="Codani J.-J."/>
            <person name="Connerton I.F."/>
            <person name="Cummings N.J."/>
            <person name="Daniel R.A."/>
            <person name="Denizot F."/>
            <person name="Devine K.M."/>
            <person name="Duesterhoeft A."/>
            <person name="Ehrlich S.D."/>
            <person name="Emmerson P.T."/>
            <person name="Entian K.-D."/>
            <person name="Errington J."/>
            <person name="Fabret C."/>
            <person name="Ferrari E."/>
            <person name="Foulger D."/>
            <person name="Fritz C."/>
            <person name="Fujita M."/>
            <person name="Fujita Y."/>
            <person name="Fuma S."/>
            <person name="Galizzi A."/>
            <person name="Galleron N."/>
            <person name="Ghim S.-Y."/>
            <person name="Glaser P."/>
            <person name="Goffeau A."/>
            <person name="Golightly E.J."/>
            <person name="Grandi G."/>
            <person name="Guiseppi G."/>
            <person name="Guy B.J."/>
            <person name="Haga K."/>
            <person name="Haiech J."/>
            <person name="Harwood C.R."/>
            <person name="Henaut A."/>
            <person name="Hilbert H."/>
            <person name="Holsappel S."/>
            <person name="Hosono S."/>
            <person name="Hullo M.-F."/>
            <person name="Itaya M."/>
            <person name="Jones L.-M."/>
            <person name="Joris B."/>
            <person name="Karamata D."/>
            <person name="Kasahara Y."/>
            <person name="Klaerr-Blanchard M."/>
            <person name="Klein C."/>
            <person name="Kobayashi Y."/>
            <person name="Koetter P."/>
            <person name="Koningstein G."/>
            <person name="Krogh S."/>
            <person name="Kumano M."/>
            <person name="Kurita K."/>
            <person name="Lapidus A."/>
            <person name="Lardinois S."/>
            <person name="Lauber J."/>
            <person name="Lazarevic V."/>
            <person name="Lee S.-M."/>
            <person name="Levine A."/>
            <person name="Liu H."/>
            <person name="Masuda S."/>
            <person name="Mauel C."/>
            <person name="Medigue C."/>
            <person name="Medina N."/>
            <person name="Mellado R.P."/>
            <person name="Mizuno M."/>
            <person name="Moestl D."/>
            <person name="Nakai S."/>
            <person name="Noback M."/>
            <person name="Noone D."/>
            <person name="O'Reilly M."/>
            <person name="Ogawa K."/>
            <person name="Ogiwara A."/>
            <person name="Oudega B."/>
            <person name="Park S.-H."/>
            <person name="Parro V."/>
            <person name="Pohl T.M."/>
            <person name="Portetelle D."/>
            <person name="Porwollik S."/>
            <person name="Prescott A.M."/>
            <person name="Presecan E."/>
            <person name="Pujic P."/>
            <person name="Purnelle B."/>
            <person name="Rapoport G."/>
            <person name="Rey M."/>
            <person name="Reynolds S."/>
            <person name="Rieger M."/>
            <person name="Rivolta C."/>
            <person name="Rocha E."/>
            <person name="Roche B."/>
            <person name="Rose M."/>
            <person name="Sadaie Y."/>
            <person name="Sato T."/>
            <person name="Scanlan E."/>
            <person name="Schleich S."/>
            <person name="Schroeter R."/>
            <person name="Scoffone F."/>
            <person name="Sekiguchi J."/>
            <person name="Sekowska A."/>
            <person name="Seror S.J."/>
            <person name="Serror P."/>
            <person name="Shin B.-S."/>
            <person name="Soldo B."/>
            <person name="Sorokin A."/>
            <person name="Tacconi E."/>
            <person name="Takagi T."/>
            <person name="Takahashi H."/>
            <person name="Takemaru K."/>
            <person name="Takeuchi M."/>
            <person name="Tamakoshi A."/>
            <person name="Tanaka T."/>
            <person name="Terpstra P."/>
            <person name="Tognoni A."/>
            <person name="Tosato V."/>
            <person name="Uchiyama S."/>
            <person name="Vandenbol M."/>
            <person name="Vannier F."/>
            <person name="Vassarotti A."/>
            <person name="Viari A."/>
            <person name="Wambutt R."/>
            <person name="Wedler E."/>
            <person name="Wedler H."/>
            <person name="Weitzenegger T."/>
            <person name="Winters P."/>
            <person name="Wipat A."/>
            <person name="Yamamoto H."/>
            <person name="Yamane K."/>
            <person name="Yasumoto K."/>
            <person name="Yata K."/>
            <person name="Yoshida K."/>
            <person name="Yoshikawa H.-F."/>
            <person name="Zumstein E."/>
            <person name="Yoshikawa H."/>
            <person name="Danchin A."/>
        </authorList>
    </citation>
    <scope>NUCLEOTIDE SEQUENCE [LARGE SCALE GENOMIC DNA]</scope>
    <source>
        <strain>168</strain>
    </source>
</reference>
<sequence length="343" mass="37402">MKQFAITLSVLCALILLVPTLLVIPFQHNKEAGASVESEKTAVSTKPASKGAETLKASPVSIPVYRTANQSVENIPLEEYVIGVVASEMPATFKPEALKAQALAARTFIVRLMVSNSAVEAPKGSLVDDTQMFQVYKSKAELKKQWGTSYETKLKKITDAVASTQGKILTYNNQPIEASFFSTSNGYTENAEAYWTSAIPYLKSVKSPWDKKSPKYKATKTFTAAEFQQKLGVKLDGSSAVGKITGETPGHQVATAVINGKTLKGRDIREKLGLNSADFEWKRNGDTITVTTRGFGHGVGMSQYGANFMAKEGKTVDDIVKYYYQGTQISEADAFLNKYMAKK</sequence>
<organism>
    <name type="scientific">Bacillus subtilis (strain 168)</name>
    <dbReference type="NCBI Taxonomy" id="224308"/>
    <lineage>
        <taxon>Bacteria</taxon>
        <taxon>Bacillati</taxon>
        <taxon>Bacillota</taxon>
        <taxon>Bacilli</taxon>
        <taxon>Bacillales</taxon>
        <taxon>Bacillaceae</taxon>
        <taxon>Bacillus</taxon>
    </lineage>
</organism>
<dbReference type="EMBL" id="M15736">
    <property type="protein sequence ID" value="AAA22793.1"/>
    <property type="molecule type" value="Genomic_DNA"/>
</dbReference>
<dbReference type="EMBL" id="Z81356">
    <property type="protein sequence ID" value="CAB03679.1"/>
    <property type="molecule type" value="Genomic_DNA"/>
</dbReference>
<dbReference type="EMBL" id="AL009126">
    <property type="protein sequence ID" value="CAB15692.1"/>
    <property type="molecule type" value="Genomic_DNA"/>
</dbReference>
<dbReference type="PIR" id="A26083">
    <property type="entry name" value="SZBS2D"/>
</dbReference>
<dbReference type="RefSeq" id="NP_391556.1">
    <property type="nucleotide sequence ID" value="NC_000964.3"/>
</dbReference>
<dbReference type="RefSeq" id="WP_003243408.1">
    <property type="nucleotide sequence ID" value="NZ_OZ025638.1"/>
</dbReference>
<dbReference type="SMR" id="P07372"/>
<dbReference type="FunCoup" id="P07372">
    <property type="interactions" value="14"/>
</dbReference>
<dbReference type="STRING" id="224308.BSU36750"/>
<dbReference type="PaxDb" id="224308-BSU36750"/>
<dbReference type="EnsemblBacteria" id="CAB15692">
    <property type="protein sequence ID" value="CAB15692"/>
    <property type="gene ID" value="BSU_36750"/>
</dbReference>
<dbReference type="GeneID" id="936979"/>
<dbReference type="KEGG" id="bsu:BSU36750"/>
<dbReference type="PATRIC" id="fig|224308.179.peg.3980"/>
<dbReference type="eggNOG" id="COG2385">
    <property type="taxonomic scope" value="Bacteria"/>
</dbReference>
<dbReference type="InParanoid" id="P07372"/>
<dbReference type="OrthoDB" id="9794671at2"/>
<dbReference type="PhylomeDB" id="P07372"/>
<dbReference type="BioCyc" id="BSUB:BSU36750-MONOMER"/>
<dbReference type="Proteomes" id="UP000001570">
    <property type="component" value="Chromosome"/>
</dbReference>
<dbReference type="GO" id="GO:0030435">
    <property type="term" value="P:sporulation resulting in formation of a cellular spore"/>
    <property type="evidence" value="ECO:0007669"/>
    <property type="project" value="UniProtKB-KW"/>
</dbReference>
<dbReference type="InterPro" id="IPR051922">
    <property type="entry name" value="Bact_Sporulation_Assoc"/>
</dbReference>
<dbReference type="InterPro" id="IPR013486">
    <property type="entry name" value="SpoIID/LytB"/>
</dbReference>
<dbReference type="InterPro" id="IPR013693">
    <property type="entry name" value="SpoIID/LytB_N"/>
</dbReference>
<dbReference type="InterPro" id="IPR014225">
    <property type="entry name" value="Spore_II_D_firmicutes"/>
</dbReference>
<dbReference type="NCBIfam" id="TIGR02669">
    <property type="entry name" value="SpoIID_LytB"/>
    <property type="match status" value="1"/>
</dbReference>
<dbReference type="NCBIfam" id="TIGR02870">
    <property type="entry name" value="spore_II_D"/>
    <property type="match status" value="1"/>
</dbReference>
<dbReference type="PANTHER" id="PTHR30032:SF4">
    <property type="entry name" value="AMIDASE ENHANCER"/>
    <property type="match status" value="1"/>
</dbReference>
<dbReference type="PANTHER" id="PTHR30032">
    <property type="entry name" value="N-ACETYLMURAMOYL-L-ALANINE AMIDASE-RELATED"/>
    <property type="match status" value="1"/>
</dbReference>
<dbReference type="Pfam" id="PF08486">
    <property type="entry name" value="SpoIID"/>
    <property type="match status" value="1"/>
</dbReference>
<feature type="chain" id="PRO_0000072058" description="Stage II sporulation protein D">
    <location>
        <begin position="1"/>
        <end position="343"/>
    </location>
</feature>
<keyword id="KW-1185">Reference proteome</keyword>
<keyword id="KW-0749">Sporulation</keyword>
<comment type="function">
    <text>May act at the level of sigma-G activity or its stability. SpoIID is probably required for engulfment.</text>
</comment>
<protein>
    <recommendedName>
        <fullName>Stage II sporulation protein D</fullName>
    </recommendedName>
    <alternativeName>
        <fullName>Stage II sporulation protein C</fullName>
    </alternativeName>
</protein>